<gene>
    <name evidence="1" type="primary">nnrE</name>
    <name type="ordered locus">LVIS_2129</name>
</gene>
<name>NNRE_LEVBA</name>
<feature type="chain" id="PRO_0000416355" description="NAD(P)H-hydrate epimerase">
    <location>
        <begin position="1"/>
        <end position="215"/>
    </location>
</feature>
<feature type="domain" description="YjeF N-terminal" evidence="1">
    <location>
        <begin position="10"/>
        <end position="211"/>
    </location>
</feature>
<feature type="binding site" evidence="1">
    <location>
        <begin position="58"/>
        <end position="62"/>
    </location>
    <ligand>
        <name>(6S)-NADPHX</name>
        <dbReference type="ChEBI" id="CHEBI:64076"/>
    </ligand>
</feature>
<feature type="binding site" evidence="1">
    <location>
        <position position="59"/>
    </location>
    <ligand>
        <name>K(+)</name>
        <dbReference type="ChEBI" id="CHEBI:29103"/>
    </ligand>
</feature>
<feature type="binding site" evidence="1">
    <location>
        <position position="121"/>
    </location>
    <ligand>
        <name>K(+)</name>
        <dbReference type="ChEBI" id="CHEBI:29103"/>
    </ligand>
</feature>
<feature type="binding site" evidence="1">
    <location>
        <begin position="125"/>
        <end position="131"/>
    </location>
    <ligand>
        <name>(6S)-NADPHX</name>
        <dbReference type="ChEBI" id="CHEBI:64076"/>
    </ligand>
</feature>
<feature type="binding site" evidence="1">
    <location>
        <position position="154"/>
    </location>
    <ligand>
        <name>(6S)-NADPHX</name>
        <dbReference type="ChEBI" id="CHEBI:64076"/>
    </ligand>
</feature>
<feature type="binding site" evidence="1">
    <location>
        <position position="157"/>
    </location>
    <ligand>
        <name>K(+)</name>
        <dbReference type="ChEBI" id="CHEBI:29103"/>
    </ligand>
</feature>
<evidence type="ECO:0000255" key="1">
    <source>
        <dbReference type="HAMAP-Rule" id="MF_01966"/>
    </source>
</evidence>
<organism>
    <name type="scientific">Levilactobacillus brevis (strain ATCC 367 / BCRC 12310 / CIP 105137 / JCM 1170 / LMG 11437 / NCIMB 947 / NCTC 947)</name>
    <name type="common">Lactobacillus brevis</name>
    <dbReference type="NCBI Taxonomy" id="387344"/>
    <lineage>
        <taxon>Bacteria</taxon>
        <taxon>Bacillati</taxon>
        <taxon>Bacillota</taxon>
        <taxon>Bacilli</taxon>
        <taxon>Lactobacillales</taxon>
        <taxon>Lactobacillaceae</taxon>
        <taxon>Levilactobacillus</taxon>
    </lineage>
</organism>
<accession>Q03NP0</accession>
<comment type="function">
    <text evidence="1">Catalyzes the epimerization of the S- and R-forms of NAD(P)HX, a damaged form of NAD(P)H that is a result of enzymatic or heat-dependent hydration. This is a prerequisite for the S-specific NAD(P)H-hydrate dehydratase to allow the repair of both epimers of NAD(P)HX.</text>
</comment>
<comment type="catalytic activity">
    <reaction evidence="1">
        <text>(6R)-NADHX = (6S)-NADHX</text>
        <dbReference type="Rhea" id="RHEA:32215"/>
        <dbReference type="ChEBI" id="CHEBI:64074"/>
        <dbReference type="ChEBI" id="CHEBI:64075"/>
        <dbReference type="EC" id="5.1.99.6"/>
    </reaction>
</comment>
<comment type="catalytic activity">
    <reaction evidence="1">
        <text>(6R)-NADPHX = (6S)-NADPHX</text>
        <dbReference type="Rhea" id="RHEA:32227"/>
        <dbReference type="ChEBI" id="CHEBI:64076"/>
        <dbReference type="ChEBI" id="CHEBI:64077"/>
        <dbReference type="EC" id="5.1.99.6"/>
    </reaction>
</comment>
<comment type="cofactor">
    <cofactor evidence="1">
        <name>K(+)</name>
        <dbReference type="ChEBI" id="CHEBI:29103"/>
    </cofactor>
    <text evidence="1">Binds 1 potassium ion per subunit.</text>
</comment>
<comment type="similarity">
    <text evidence="1">Belongs to the NnrE/AIBP family.</text>
</comment>
<protein>
    <recommendedName>
        <fullName evidence="1">NAD(P)H-hydrate epimerase</fullName>
        <ecNumber evidence="1">5.1.99.6</ecNumber>
    </recommendedName>
    <alternativeName>
        <fullName evidence="1">NAD(P)HX epimerase</fullName>
    </alternativeName>
</protein>
<reference key="1">
    <citation type="journal article" date="2006" name="Proc. Natl. Acad. Sci. U.S.A.">
        <title>Comparative genomics of the lactic acid bacteria.</title>
        <authorList>
            <person name="Makarova K.S."/>
            <person name="Slesarev A."/>
            <person name="Wolf Y.I."/>
            <person name="Sorokin A."/>
            <person name="Mirkin B."/>
            <person name="Koonin E.V."/>
            <person name="Pavlov A."/>
            <person name="Pavlova N."/>
            <person name="Karamychev V."/>
            <person name="Polouchine N."/>
            <person name="Shakhova V."/>
            <person name="Grigoriev I."/>
            <person name="Lou Y."/>
            <person name="Rohksar D."/>
            <person name="Lucas S."/>
            <person name="Huang K."/>
            <person name="Goodstein D.M."/>
            <person name="Hawkins T."/>
            <person name="Plengvidhya V."/>
            <person name="Welker D."/>
            <person name="Hughes J."/>
            <person name="Goh Y."/>
            <person name="Benson A."/>
            <person name="Baldwin K."/>
            <person name="Lee J.-H."/>
            <person name="Diaz-Muniz I."/>
            <person name="Dosti B."/>
            <person name="Smeianov V."/>
            <person name="Wechter W."/>
            <person name="Barabote R."/>
            <person name="Lorca G."/>
            <person name="Altermann E."/>
            <person name="Barrangou R."/>
            <person name="Ganesan B."/>
            <person name="Xie Y."/>
            <person name="Rawsthorne H."/>
            <person name="Tamir D."/>
            <person name="Parker C."/>
            <person name="Breidt F."/>
            <person name="Broadbent J.R."/>
            <person name="Hutkins R."/>
            <person name="O'Sullivan D."/>
            <person name="Steele J."/>
            <person name="Unlu G."/>
            <person name="Saier M.H. Jr."/>
            <person name="Klaenhammer T."/>
            <person name="Richardson P."/>
            <person name="Kozyavkin S."/>
            <person name="Weimer B.C."/>
            <person name="Mills D.A."/>
        </authorList>
    </citation>
    <scope>NUCLEOTIDE SEQUENCE [LARGE SCALE GENOMIC DNA]</scope>
    <source>
        <strain>ATCC 367 / BCRC 12310 / CIP 105137 / JCM 1170 / LMG 11437 / NCIMB 947 / NCTC 947</strain>
    </source>
</reference>
<dbReference type="EC" id="5.1.99.6" evidence="1"/>
<dbReference type="EMBL" id="CP000416">
    <property type="protein sequence ID" value="ABJ65182.1"/>
    <property type="molecule type" value="Genomic_DNA"/>
</dbReference>
<dbReference type="RefSeq" id="WP_011668905.1">
    <property type="nucleotide sequence ID" value="NC_008497.1"/>
</dbReference>
<dbReference type="SMR" id="Q03NP0"/>
<dbReference type="STRING" id="387344.LVIS_2129"/>
<dbReference type="KEGG" id="lbr:LVIS_2129"/>
<dbReference type="PATRIC" id="fig|387344.15.peg.2033"/>
<dbReference type="eggNOG" id="COG0062">
    <property type="taxonomic scope" value="Bacteria"/>
</dbReference>
<dbReference type="HOGENOM" id="CLU_024853_0_1_9"/>
<dbReference type="Proteomes" id="UP000001652">
    <property type="component" value="Chromosome"/>
</dbReference>
<dbReference type="GO" id="GO:0046872">
    <property type="term" value="F:metal ion binding"/>
    <property type="evidence" value="ECO:0007669"/>
    <property type="project" value="UniProtKB-KW"/>
</dbReference>
<dbReference type="GO" id="GO:0052856">
    <property type="term" value="F:NAD(P)HX epimerase activity"/>
    <property type="evidence" value="ECO:0007669"/>
    <property type="project" value="UniProtKB-UniRule"/>
</dbReference>
<dbReference type="GO" id="GO:0000166">
    <property type="term" value="F:nucleotide binding"/>
    <property type="evidence" value="ECO:0007669"/>
    <property type="project" value="UniProtKB-KW"/>
</dbReference>
<dbReference type="Gene3D" id="3.40.50.10260">
    <property type="entry name" value="YjeF N-terminal domain"/>
    <property type="match status" value="1"/>
</dbReference>
<dbReference type="HAMAP" id="MF_01966">
    <property type="entry name" value="NADHX_epimerase"/>
    <property type="match status" value="1"/>
</dbReference>
<dbReference type="InterPro" id="IPR004443">
    <property type="entry name" value="YjeF_N_dom"/>
</dbReference>
<dbReference type="InterPro" id="IPR036652">
    <property type="entry name" value="YjeF_N_dom_sf"/>
</dbReference>
<dbReference type="InterPro" id="IPR032976">
    <property type="entry name" value="YJEFN_prot_NAXE-like"/>
</dbReference>
<dbReference type="NCBIfam" id="TIGR00197">
    <property type="entry name" value="yjeF_nterm"/>
    <property type="match status" value="1"/>
</dbReference>
<dbReference type="PANTHER" id="PTHR13232">
    <property type="entry name" value="NAD(P)H-HYDRATE EPIMERASE"/>
    <property type="match status" value="1"/>
</dbReference>
<dbReference type="PANTHER" id="PTHR13232:SF10">
    <property type="entry name" value="NAD(P)H-HYDRATE EPIMERASE"/>
    <property type="match status" value="1"/>
</dbReference>
<dbReference type="Pfam" id="PF03853">
    <property type="entry name" value="YjeF_N"/>
    <property type="match status" value="1"/>
</dbReference>
<dbReference type="SUPFAM" id="SSF64153">
    <property type="entry name" value="YjeF N-terminal domain-like"/>
    <property type="match status" value="1"/>
</dbReference>
<dbReference type="PROSITE" id="PS51385">
    <property type="entry name" value="YJEF_N"/>
    <property type="match status" value="1"/>
</dbReference>
<sequence length="215" mass="22530">MSKAITIAEAQRYDAHATNVIGIPAMVLMERAALATFNNLLNDDFDLDRVVVVAATGNNGGDGIAVARLLKIRGIDVTIYLLGDPENATPQTSQQLKIANYYNIPVTADLNQIVNATLIVDAIFGVGLTRDVTGKFADAINAINAADAKTVAIDVPSGINADTGAVMGVAVVADSTTTMAYNKIGLLTTVGKQHAGTIHVADIGIYAQDRVEHAR</sequence>
<proteinExistence type="inferred from homology"/>
<keyword id="KW-0413">Isomerase</keyword>
<keyword id="KW-0479">Metal-binding</keyword>
<keyword id="KW-0520">NAD</keyword>
<keyword id="KW-0521">NADP</keyword>
<keyword id="KW-0547">Nucleotide-binding</keyword>
<keyword id="KW-0630">Potassium</keyword>
<keyword id="KW-1185">Reference proteome</keyword>